<reference key="1">
    <citation type="journal article" date="2002" name="DNA Res.">
        <title>Complete genome structure of the thermophilic cyanobacterium Thermosynechococcus elongatus BP-1.</title>
        <authorList>
            <person name="Nakamura Y."/>
            <person name="Kaneko T."/>
            <person name="Sato S."/>
            <person name="Ikeuchi M."/>
            <person name="Katoh H."/>
            <person name="Sasamoto S."/>
            <person name="Watanabe A."/>
            <person name="Iriguchi M."/>
            <person name="Kawashima K."/>
            <person name="Kimura T."/>
            <person name="Kishida Y."/>
            <person name="Kiyokawa C."/>
            <person name="Kohara M."/>
            <person name="Matsumoto M."/>
            <person name="Matsuno A."/>
            <person name="Nakazaki N."/>
            <person name="Shimpo S."/>
            <person name="Sugimoto M."/>
            <person name="Takeuchi C."/>
            <person name="Yamada M."/>
            <person name="Tabata S."/>
        </authorList>
    </citation>
    <scope>NUCLEOTIDE SEQUENCE [LARGE SCALE GENOMIC DNA]</scope>
    <source>
        <strain>NIES-2133 / IAM M-273 / BP-1</strain>
    </source>
</reference>
<keyword id="KW-0240">DNA-directed RNA polymerase</keyword>
<keyword id="KW-0460">Magnesium</keyword>
<keyword id="KW-0479">Metal-binding</keyword>
<keyword id="KW-0548">Nucleotidyltransferase</keyword>
<keyword id="KW-1185">Reference proteome</keyword>
<keyword id="KW-0804">Transcription</keyword>
<keyword id="KW-0808">Transferase</keyword>
<keyword id="KW-0862">Zinc</keyword>
<comment type="function">
    <text evidence="1">DNA-dependent RNA polymerase catalyzes the transcription of DNA into RNA using the four ribonucleoside triphosphates as substrates.</text>
</comment>
<comment type="catalytic activity">
    <reaction evidence="1">
        <text>RNA(n) + a ribonucleoside 5'-triphosphate = RNA(n+1) + diphosphate</text>
        <dbReference type="Rhea" id="RHEA:21248"/>
        <dbReference type="Rhea" id="RHEA-COMP:14527"/>
        <dbReference type="Rhea" id="RHEA-COMP:17342"/>
        <dbReference type="ChEBI" id="CHEBI:33019"/>
        <dbReference type="ChEBI" id="CHEBI:61557"/>
        <dbReference type="ChEBI" id="CHEBI:140395"/>
        <dbReference type="EC" id="2.7.7.6"/>
    </reaction>
</comment>
<comment type="cofactor">
    <cofactor evidence="1">
        <name>Mg(2+)</name>
        <dbReference type="ChEBI" id="CHEBI:18420"/>
    </cofactor>
    <text evidence="1">Binds 1 Mg(2+) ion per subunit.</text>
</comment>
<comment type="cofactor">
    <cofactor evidence="1">
        <name>Zn(2+)</name>
        <dbReference type="ChEBI" id="CHEBI:29105"/>
    </cofactor>
    <text evidence="1">Binds 1 Zn(2+) ion per subunit.</text>
</comment>
<comment type="subunit">
    <text evidence="1">In cyanobacteria the RNAP catalytic core is composed of 2 alpha, 1 beta, 1 beta', 1 gamma and 1 omega subunit. When a sigma factor is associated with the core the holoenzyme is formed, which can initiate transcription.</text>
</comment>
<comment type="similarity">
    <text evidence="1">Belongs to the RNA polymerase beta' chain family. RpoC1 subfamily.</text>
</comment>
<name>RPOC1_THEVB</name>
<organism>
    <name type="scientific">Thermosynechococcus vestitus (strain NIES-2133 / IAM M-273 / BP-1)</name>
    <dbReference type="NCBI Taxonomy" id="197221"/>
    <lineage>
        <taxon>Bacteria</taxon>
        <taxon>Bacillati</taxon>
        <taxon>Cyanobacteriota</taxon>
        <taxon>Cyanophyceae</taxon>
        <taxon>Acaryochloridales</taxon>
        <taxon>Thermosynechococcaceae</taxon>
        <taxon>Thermosynechococcus</taxon>
    </lineage>
</organism>
<accession>Q8DL56</accession>
<protein>
    <recommendedName>
        <fullName evidence="1">DNA-directed RNA polymerase subunit gamma</fullName>
        <shortName evidence="1">RNAP subunit gamma</shortName>
        <ecNumber evidence="1">2.7.7.6</ecNumber>
    </recommendedName>
    <alternativeName>
        <fullName evidence="1">RNA polymerase subunit gamma</fullName>
    </alternativeName>
    <alternativeName>
        <fullName evidence="1">Transcriptase subunit gamma</fullName>
    </alternativeName>
</protein>
<proteinExistence type="inferred from homology"/>
<dbReference type="EC" id="2.7.7.6" evidence="1"/>
<dbReference type="EMBL" id="BA000039">
    <property type="protein sequence ID" value="BAC08192.1"/>
    <property type="molecule type" value="Genomic_DNA"/>
</dbReference>
<dbReference type="RefSeq" id="NP_681430.1">
    <property type="nucleotide sequence ID" value="NC_004113.1"/>
</dbReference>
<dbReference type="RefSeq" id="WP_011056488.1">
    <property type="nucleotide sequence ID" value="NC_004113.1"/>
</dbReference>
<dbReference type="SMR" id="Q8DL56"/>
<dbReference type="STRING" id="197221.gene:10747231"/>
<dbReference type="EnsemblBacteria" id="BAC08192">
    <property type="protein sequence ID" value="BAC08192"/>
    <property type="gene ID" value="BAC08192"/>
</dbReference>
<dbReference type="KEGG" id="tel:tll0641"/>
<dbReference type="PATRIC" id="fig|197221.4.peg.680"/>
<dbReference type="eggNOG" id="COG0086">
    <property type="taxonomic scope" value="Bacteria"/>
</dbReference>
<dbReference type="Proteomes" id="UP000000440">
    <property type="component" value="Chromosome"/>
</dbReference>
<dbReference type="GO" id="GO:0000428">
    <property type="term" value="C:DNA-directed RNA polymerase complex"/>
    <property type="evidence" value="ECO:0007669"/>
    <property type="project" value="UniProtKB-KW"/>
</dbReference>
<dbReference type="GO" id="GO:0003677">
    <property type="term" value="F:DNA binding"/>
    <property type="evidence" value="ECO:0007669"/>
    <property type="project" value="UniProtKB-UniRule"/>
</dbReference>
<dbReference type="GO" id="GO:0003899">
    <property type="term" value="F:DNA-directed RNA polymerase activity"/>
    <property type="evidence" value="ECO:0007669"/>
    <property type="project" value="UniProtKB-UniRule"/>
</dbReference>
<dbReference type="GO" id="GO:0000287">
    <property type="term" value="F:magnesium ion binding"/>
    <property type="evidence" value="ECO:0007669"/>
    <property type="project" value="UniProtKB-UniRule"/>
</dbReference>
<dbReference type="GO" id="GO:0008270">
    <property type="term" value="F:zinc ion binding"/>
    <property type="evidence" value="ECO:0007669"/>
    <property type="project" value="UniProtKB-UniRule"/>
</dbReference>
<dbReference type="GO" id="GO:0006351">
    <property type="term" value="P:DNA-templated transcription"/>
    <property type="evidence" value="ECO:0007669"/>
    <property type="project" value="UniProtKB-UniRule"/>
</dbReference>
<dbReference type="CDD" id="cd01609">
    <property type="entry name" value="RNAP_beta'_N"/>
    <property type="match status" value="1"/>
</dbReference>
<dbReference type="Gene3D" id="1.10.40.90">
    <property type="match status" value="1"/>
</dbReference>
<dbReference type="Gene3D" id="2.40.40.20">
    <property type="match status" value="1"/>
</dbReference>
<dbReference type="Gene3D" id="4.10.860.120">
    <property type="entry name" value="RNA polymerase II, clamp domain"/>
    <property type="match status" value="1"/>
</dbReference>
<dbReference type="Gene3D" id="1.10.274.100">
    <property type="entry name" value="RNA polymerase Rpb1, domain 3"/>
    <property type="match status" value="1"/>
</dbReference>
<dbReference type="HAMAP" id="MF_01323">
    <property type="entry name" value="RNApol_bact_RpoC1"/>
    <property type="match status" value="1"/>
</dbReference>
<dbReference type="InterPro" id="IPR012755">
    <property type="entry name" value="DNA-dir_RpoC1_gamma"/>
</dbReference>
<dbReference type="InterPro" id="IPR045867">
    <property type="entry name" value="DNA-dir_RpoC_beta_prime"/>
</dbReference>
<dbReference type="InterPro" id="IPR000722">
    <property type="entry name" value="RNA_pol_asu"/>
</dbReference>
<dbReference type="InterPro" id="IPR006592">
    <property type="entry name" value="RNA_pol_N"/>
</dbReference>
<dbReference type="InterPro" id="IPR007080">
    <property type="entry name" value="RNA_pol_Rpb1_1"/>
</dbReference>
<dbReference type="InterPro" id="IPR007066">
    <property type="entry name" value="RNA_pol_Rpb1_3"/>
</dbReference>
<dbReference type="InterPro" id="IPR042102">
    <property type="entry name" value="RNA_pol_Rpb1_3_sf"/>
</dbReference>
<dbReference type="InterPro" id="IPR044893">
    <property type="entry name" value="RNA_pol_Rpb1_clamp_domain"/>
</dbReference>
<dbReference type="InterPro" id="IPR034678">
    <property type="entry name" value="RNApol_RpoC1"/>
</dbReference>
<dbReference type="NCBIfam" id="NF002729">
    <property type="entry name" value="PRK02625.1"/>
    <property type="match status" value="1"/>
</dbReference>
<dbReference type="NCBIfam" id="TIGR02387">
    <property type="entry name" value="rpoC1_cyan"/>
    <property type="match status" value="1"/>
</dbReference>
<dbReference type="PANTHER" id="PTHR19376">
    <property type="entry name" value="DNA-DIRECTED RNA POLYMERASE"/>
    <property type="match status" value="1"/>
</dbReference>
<dbReference type="PANTHER" id="PTHR19376:SF54">
    <property type="entry name" value="DNA-DIRECTED RNA POLYMERASE SUBUNIT BETA"/>
    <property type="match status" value="1"/>
</dbReference>
<dbReference type="Pfam" id="PF04997">
    <property type="entry name" value="RNA_pol_Rpb1_1"/>
    <property type="match status" value="1"/>
</dbReference>
<dbReference type="Pfam" id="PF00623">
    <property type="entry name" value="RNA_pol_Rpb1_2"/>
    <property type="match status" value="1"/>
</dbReference>
<dbReference type="Pfam" id="PF04983">
    <property type="entry name" value="RNA_pol_Rpb1_3"/>
    <property type="match status" value="1"/>
</dbReference>
<dbReference type="SMART" id="SM00663">
    <property type="entry name" value="RPOLA_N"/>
    <property type="match status" value="1"/>
</dbReference>
<dbReference type="SUPFAM" id="SSF64484">
    <property type="entry name" value="beta and beta-prime subunits of DNA dependent RNA-polymerase"/>
    <property type="match status" value="1"/>
</dbReference>
<sequence length="622" mass="71178">MPRLEQRFDYVKVSLASPERIIQWGQRTLPNGQVVGEVTKPETINYRTLKPEMDGLFCERIFGPAKDWECHCGKYKRVRHRGIVCERCGVEVTESRVRRHRMGYIKLAAPVTHVWYLKGIPSYMAILLDMPLRDVEQIVYFNSYVVLDPGNHPGLSYKQLLSEDQWQDIEEEIYREDSELEGVEVGIGAEAIQRLLRDLDLQAEADQLRQEILNSKGQKRAKLIKRLRVIDNFIATGAKPEWMVLTVIPVIPPDLRPMVQLDGGRFATSDLNDLYRRVINRNNRLARLQEILAPEIIVRNEKRMLQEAVDALIDNGRRGRTVVGANNRPLKSLSDIIEGKQGRFRQNLLGKRVDYSGRSVIVVGPKLQMHQCGLPREMAIELFQPFVIHRLIRQQIVNNIKAAKRMIQRNDPQIWDVLEEVIEGHPVLLNRAPTLHRLGIQAFEPILVEGRAIQLHPLVCPAFNADFDGDQMAVHVPLSIEAQAEARMLMLASNNILSPATGKPIITPSQDMVLGCYYLTAENPKLPDYSDRYYANFQDVVMAYEQGHLPLHAFVWVRYDGEVDDGDTSEPQITTYEDGSRLLEYALRRVKEDANGQRISQYIRTTPGRIIYNQTIQEALAS</sequence>
<gene>
    <name evidence="1" type="primary">rpoC1</name>
    <name type="ordered locus">tll0641</name>
</gene>
<feature type="chain" id="PRO_0000067850" description="DNA-directed RNA polymerase subunit gamma">
    <location>
        <begin position="1"/>
        <end position="622"/>
    </location>
</feature>
<feature type="binding site" evidence="1">
    <location>
        <position position="70"/>
    </location>
    <ligand>
        <name>Zn(2+)</name>
        <dbReference type="ChEBI" id="CHEBI:29105"/>
    </ligand>
</feature>
<feature type="binding site" evidence="1">
    <location>
        <position position="72"/>
    </location>
    <ligand>
        <name>Zn(2+)</name>
        <dbReference type="ChEBI" id="CHEBI:29105"/>
    </ligand>
</feature>
<feature type="binding site" evidence="1">
    <location>
        <position position="85"/>
    </location>
    <ligand>
        <name>Zn(2+)</name>
        <dbReference type="ChEBI" id="CHEBI:29105"/>
    </ligand>
</feature>
<feature type="binding site" evidence="1">
    <location>
        <position position="88"/>
    </location>
    <ligand>
        <name>Zn(2+)</name>
        <dbReference type="ChEBI" id="CHEBI:29105"/>
    </ligand>
</feature>
<feature type="binding site" evidence="1">
    <location>
        <position position="466"/>
    </location>
    <ligand>
        <name>Mg(2+)</name>
        <dbReference type="ChEBI" id="CHEBI:18420"/>
    </ligand>
</feature>
<feature type="binding site" evidence="1">
    <location>
        <position position="468"/>
    </location>
    <ligand>
        <name>Mg(2+)</name>
        <dbReference type="ChEBI" id="CHEBI:18420"/>
    </ligand>
</feature>
<feature type="binding site" evidence="1">
    <location>
        <position position="470"/>
    </location>
    <ligand>
        <name>Mg(2+)</name>
        <dbReference type="ChEBI" id="CHEBI:18420"/>
    </ligand>
</feature>
<evidence type="ECO:0000255" key="1">
    <source>
        <dbReference type="HAMAP-Rule" id="MF_01323"/>
    </source>
</evidence>